<reference key="1">
    <citation type="journal article" date="1994" name="J. Virol.">
        <title>Nucleotide sequence analysis of a 38.5-kilobase-pair region of the genome of human herpesvirus 6 encoding human cytomegalovirus immediate-early gene homologs and transactivating functions.</title>
        <authorList>
            <person name="Nicholas J."/>
            <person name="Martin M.E.D."/>
        </authorList>
    </citation>
    <scope>NUCLEOTIDE SEQUENCE [GENOMIC DNA]</scope>
</reference>
<reference key="2">
    <citation type="journal article" date="1995" name="Virology">
        <title>The DNA sequence of human herpesvirus-6: structure, coding content, and genome evolution.</title>
        <authorList>
            <person name="Gompels U.A."/>
            <person name="Nicholas J."/>
            <person name="Lawrence G.L."/>
            <person name="Jones M."/>
            <person name="Thomson B.J."/>
            <person name="Martin M.E.D."/>
            <person name="Efstathiou S."/>
            <person name="Craxton M.A."/>
            <person name="Macaulay H.A."/>
        </authorList>
    </citation>
    <scope>NUCLEOTIDE SEQUENCE [LARGE SCALE GENOMIC DNA]</scope>
</reference>
<organismHost>
    <name type="scientific">Homo sapiens</name>
    <name type="common">Human</name>
    <dbReference type="NCBI Taxonomy" id="9606"/>
</organismHost>
<comment type="function">
    <text evidence="1">Structural component of the T=16 icosahedral capsid. The capsid is composed of pentamers and hexamers of major capsid protein/MCP, which are linked together by heterotrimers called triplexes. These triplexes are formed by a single molecule of triplex protein 1/TRX1 and two copies of triplex protein 2/TRX2. Additionally, TRX1 is required for efficient transport of TRX2 to the nucleus, which is the site of capsid assembly.</text>
</comment>
<comment type="subunit">
    <text evidence="1">Interacts with TRX2, MCP and capsid vertex component 2/CVC2.</text>
</comment>
<comment type="subcellular location">
    <subcellularLocation>
        <location evidence="1">Virion</location>
    </subcellularLocation>
    <subcellularLocation>
        <location evidence="1">Host nucleus</location>
    </subcellularLocation>
</comment>
<comment type="similarity">
    <text evidence="1">Belongs to the herpesviridae TRX1 protein family.</text>
</comment>
<comment type="sequence caution" evidence="2">
    <conflict type="erroneous initiation">
        <sequence resource="EMBL-CDS" id="AAA16737"/>
    </conflict>
    <text>Extended N-terminus.</text>
</comment>
<comment type="sequence caution" evidence="2">
    <conflict type="frameshift">
        <sequence resource="EMBL-CDS" id="AAA16737"/>
    </conflict>
</comment>
<dbReference type="EMBL" id="L25528">
    <property type="protein sequence ID" value="AAA16737.1"/>
    <property type="status" value="ALT_SEQ"/>
    <property type="molecule type" value="Genomic_DNA"/>
</dbReference>
<dbReference type="EMBL" id="X83413">
    <property type="protein sequence ID" value="CAA58409.1"/>
    <property type="molecule type" value="Genomic_DNA"/>
</dbReference>
<dbReference type="PIR" id="T09324">
    <property type="entry name" value="T09324"/>
</dbReference>
<dbReference type="RefSeq" id="NP_042922.1">
    <property type="nucleotide sequence ID" value="NC_001664.2"/>
</dbReference>
<dbReference type="SMR" id="P52348"/>
<dbReference type="DNASU" id="1487906"/>
<dbReference type="GeneID" id="1487906"/>
<dbReference type="KEGG" id="vg:1487906"/>
<dbReference type="Proteomes" id="UP000009295">
    <property type="component" value="Segment"/>
</dbReference>
<dbReference type="GO" id="GO:0042025">
    <property type="term" value="C:host cell nucleus"/>
    <property type="evidence" value="ECO:0007669"/>
    <property type="project" value="UniProtKB-SubCell"/>
</dbReference>
<dbReference type="GO" id="GO:0019028">
    <property type="term" value="C:viral capsid"/>
    <property type="evidence" value="ECO:0007669"/>
    <property type="project" value="UniProtKB-KW"/>
</dbReference>
<dbReference type="GO" id="GO:0003677">
    <property type="term" value="F:DNA binding"/>
    <property type="evidence" value="ECO:0007669"/>
    <property type="project" value="InterPro"/>
</dbReference>
<dbReference type="GO" id="GO:0019069">
    <property type="term" value="P:viral capsid assembly"/>
    <property type="evidence" value="ECO:0007669"/>
    <property type="project" value="InterPro"/>
</dbReference>
<dbReference type="HAMAP" id="MF_04018">
    <property type="entry name" value="HSV_TRX1"/>
    <property type="match status" value="1"/>
</dbReference>
<dbReference type="InterPro" id="IPR004999">
    <property type="entry name" value="Herpes_1"/>
</dbReference>
<dbReference type="Pfam" id="PF03327">
    <property type="entry name" value="Herpes_VP19C"/>
    <property type="match status" value="1"/>
</dbReference>
<feature type="chain" id="PRO_0000115719" description="Triplex capsid protein 1">
    <location>
        <begin position="1"/>
        <end position="299"/>
    </location>
</feature>
<sequence>MNSKSSARAAIVDTVEAVKKRKYISIDEGTLNNVVEKERKFLKQFLSGRQNLRIAARVFTPCELLAPELENLGMLMYRFETDVDNPKILFVGLFFLCSNAFNVSTCVRTALTAMYTNSMVDNVLSMINTCRYLEDKVSLFGVTSLVSCGSSCLLSCVMQGNVYDVNKENIYGLTVLKEIILEPDWEPRQHSTQYVYVVHVYKEVLAKLQYGIYVVLTSFQNEDLIVDILRQYFEKERFLFLNYLINSNTTLSYFGSVQRIGRCATEDIKSGFLQYRGITLSVIKLENIFVDLSEKKVFV</sequence>
<organism>
    <name type="scientific">Human herpesvirus 6A (strain Uganda-1102)</name>
    <name type="common">HHV-6 variant A</name>
    <name type="synonym">Human B lymphotropic virus</name>
    <dbReference type="NCBI Taxonomy" id="10370"/>
    <lineage>
        <taxon>Viruses</taxon>
        <taxon>Duplodnaviria</taxon>
        <taxon>Heunggongvirae</taxon>
        <taxon>Peploviricota</taxon>
        <taxon>Herviviricetes</taxon>
        <taxon>Herpesvirales</taxon>
        <taxon>Orthoherpesviridae</taxon>
        <taxon>Betaherpesvirinae</taxon>
        <taxon>Roseolovirus</taxon>
        <taxon>Roseolovirus humanbeta6a</taxon>
        <taxon>Human betaherpesvirus 6A</taxon>
    </lineage>
</organism>
<protein>
    <recommendedName>
        <fullName evidence="1">Triplex capsid protein 1</fullName>
    </recommendedName>
</protein>
<evidence type="ECO:0000255" key="1">
    <source>
        <dbReference type="HAMAP-Rule" id="MF_04018"/>
    </source>
</evidence>
<evidence type="ECO:0000305" key="2"/>
<name>TRX1_HHV6U</name>
<keyword id="KW-0167">Capsid protein</keyword>
<keyword id="KW-1048">Host nucleus</keyword>
<keyword id="KW-1185">Reference proteome</keyword>
<keyword id="KW-0946">Virion</keyword>
<proteinExistence type="inferred from homology"/>
<accession>P52348</accession>
<accession>Q69053</accession>
<gene>
    <name evidence="1" type="primary">TRX1</name>
    <name type="ordered locus">P2LF1</name>
    <name type="ordered locus">U29</name>
</gene>